<proteinExistence type="inferred from homology"/>
<comment type="function">
    <text evidence="1">Involved in the restart of stalled replication forks, which reloads the replicative helicase on sites other than the origin of replication; the PriA-PriB pathway is the major replication restart pathway. During primosome assembly it facilitates complex formation between PriA and DnaT on DNA; stabilizes PriA on DNA. Stimulates the DNA unwinding activity of PriA helicase.</text>
</comment>
<comment type="subunit">
    <text evidence="1">Homodimer. Interacts with PriA and DnaT. Component of the replication restart primosome. Primosome assembly occurs via a 'hand-off' mechanism. PriA binds to replication forks, subsequently PriB then DnaT bind; DnaT then displaces ssDNA to generate the helicase loading substrate.</text>
</comment>
<comment type="similarity">
    <text evidence="1">Belongs to the PriB family.</text>
</comment>
<name>PRIB_PROMH</name>
<sequence>MTANRLVLTGTVCKALIRKVSPAGIPHCQFVIEHRSTQEEAGLKRQSWCRMPIIASGKALQTDTHSITVGSKVTVSGFISSHQARNGLFKLVLHAEQIELIDSGD</sequence>
<reference key="1">
    <citation type="journal article" date="2008" name="J. Bacteriol.">
        <title>Complete genome sequence of uropathogenic Proteus mirabilis, a master of both adherence and motility.</title>
        <authorList>
            <person name="Pearson M.M."/>
            <person name="Sebaihia M."/>
            <person name="Churcher C."/>
            <person name="Quail M.A."/>
            <person name="Seshasayee A.S."/>
            <person name="Luscombe N.M."/>
            <person name="Abdellah Z."/>
            <person name="Arrosmith C."/>
            <person name="Atkin B."/>
            <person name="Chillingworth T."/>
            <person name="Hauser H."/>
            <person name="Jagels K."/>
            <person name="Moule S."/>
            <person name="Mungall K."/>
            <person name="Norbertczak H."/>
            <person name="Rabbinowitsch E."/>
            <person name="Walker D."/>
            <person name="Whithead S."/>
            <person name="Thomson N.R."/>
            <person name="Rather P.N."/>
            <person name="Parkhill J."/>
            <person name="Mobley H.L.T."/>
        </authorList>
    </citation>
    <scope>NUCLEOTIDE SEQUENCE [LARGE SCALE GENOMIC DNA]</scope>
    <source>
        <strain>HI4320</strain>
    </source>
</reference>
<dbReference type="EMBL" id="AM942759">
    <property type="protein sequence ID" value="CAR46618.1"/>
    <property type="molecule type" value="Genomic_DNA"/>
</dbReference>
<dbReference type="RefSeq" id="WP_004246282.1">
    <property type="nucleotide sequence ID" value="NC_010554.1"/>
</dbReference>
<dbReference type="SMR" id="B4F276"/>
<dbReference type="EnsemblBacteria" id="CAR46618">
    <property type="protein sequence ID" value="CAR46618"/>
    <property type="gene ID" value="PMI3375"/>
</dbReference>
<dbReference type="GeneID" id="6799963"/>
<dbReference type="KEGG" id="pmr:PMI3375"/>
<dbReference type="eggNOG" id="COG2965">
    <property type="taxonomic scope" value="Bacteria"/>
</dbReference>
<dbReference type="HOGENOM" id="CLU_166075_0_0_6"/>
<dbReference type="Proteomes" id="UP000008319">
    <property type="component" value="Chromosome"/>
</dbReference>
<dbReference type="GO" id="GO:1990077">
    <property type="term" value="C:primosome complex"/>
    <property type="evidence" value="ECO:0007669"/>
    <property type="project" value="UniProtKB-KW"/>
</dbReference>
<dbReference type="GO" id="GO:0003697">
    <property type="term" value="F:single-stranded DNA binding"/>
    <property type="evidence" value="ECO:0007669"/>
    <property type="project" value="UniProtKB-UniRule"/>
</dbReference>
<dbReference type="GO" id="GO:0006269">
    <property type="term" value="P:DNA replication, synthesis of primer"/>
    <property type="evidence" value="ECO:0007669"/>
    <property type="project" value="UniProtKB-KW"/>
</dbReference>
<dbReference type="Gene3D" id="2.40.50.140">
    <property type="entry name" value="Nucleic acid-binding proteins"/>
    <property type="match status" value="1"/>
</dbReference>
<dbReference type="HAMAP" id="MF_00720">
    <property type="entry name" value="PriB"/>
    <property type="match status" value="1"/>
</dbReference>
<dbReference type="InterPro" id="IPR012340">
    <property type="entry name" value="NA-bd_OB-fold"/>
</dbReference>
<dbReference type="InterPro" id="IPR000424">
    <property type="entry name" value="Primosome_PriB/ssb"/>
</dbReference>
<dbReference type="InterPro" id="IPR023646">
    <property type="entry name" value="Prisomal_replication_PriB"/>
</dbReference>
<dbReference type="NCBIfam" id="TIGR04418">
    <property type="entry name" value="PriB_gamma"/>
    <property type="match status" value="1"/>
</dbReference>
<dbReference type="Pfam" id="PF22657">
    <property type="entry name" value="SSB_1"/>
    <property type="match status" value="1"/>
</dbReference>
<dbReference type="PIRSF" id="PIRSF003135">
    <property type="entry name" value="Primosomal_n"/>
    <property type="match status" value="1"/>
</dbReference>
<dbReference type="SUPFAM" id="SSF50249">
    <property type="entry name" value="Nucleic acid-binding proteins"/>
    <property type="match status" value="1"/>
</dbReference>
<dbReference type="PROSITE" id="PS50935">
    <property type="entry name" value="SSB"/>
    <property type="match status" value="1"/>
</dbReference>
<protein>
    <recommendedName>
        <fullName evidence="1">Replication restart protein PriB</fullName>
    </recommendedName>
</protein>
<accession>B4F276</accession>
<organism>
    <name type="scientific">Proteus mirabilis (strain HI4320)</name>
    <dbReference type="NCBI Taxonomy" id="529507"/>
    <lineage>
        <taxon>Bacteria</taxon>
        <taxon>Pseudomonadati</taxon>
        <taxon>Pseudomonadota</taxon>
        <taxon>Gammaproteobacteria</taxon>
        <taxon>Enterobacterales</taxon>
        <taxon>Morganellaceae</taxon>
        <taxon>Proteus</taxon>
    </lineage>
</organism>
<gene>
    <name evidence="1" type="primary">priB</name>
    <name type="ordered locus">PMI3375</name>
</gene>
<keyword id="KW-0235">DNA replication</keyword>
<keyword id="KW-0238">DNA-binding</keyword>
<keyword id="KW-0639">Primosome</keyword>
<keyword id="KW-1185">Reference proteome</keyword>
<feature type="chain" id="PRO_1000132625" description="Replication restart protein PriB">
    <location>
        <begin position="1"/>
        <end position="105"/>
    </location>
</feature>
<feature type="domain" description="SSB" evidence="1">
    <location>
        <begin position="1"/>
        <end position="102"/>
    </location>
</feature>
<evidence type="ECO:0000255" key="1">
    <source>
        <dbReference type="HAMAP-Rule" id="MF_00720"/>
    </source>
</evidence>